<keyword id="KW-0150">Chloroplast</keyword>
<keyword id="KW-0934">Plastid</keyword>
<keyword id="KW-0687">Ribonucleoprotein</keyword>
<keyword id="KW-0689">Ribosomal protein</keyword>
<keyword id="KW-0694">RNA-binding</keyword>
<keyword id="KW-0699">rRNA-binding</keyword>
<sequence>MDGIKYAVFTEKSIRLLGNNQYTSNVESGSTRTEIKHWVELFFGVKVIAMNSHRLPGKGRRMGPIMGHTMHYRRMIITLQPGYSIPPLIEKRT</sequence>
<name>RK23_DRIGR</name>
<organism>
    <name type="scientific">Drimys granadensis</name>
    <dbReference type="NCBI Taxonomy" id="224735"/>
    <lineage>
        <taxon>Eukaryota</taxon>
        <taxon>Viridiplantae</taxon>
        <taxon>Streptophyta</taxon>
        <taxon>Embryophyta</taxon>
        <taxon>Tracheophyta</taxon>
        <taxon>Spermatophyta</taxon>
        <taxon>Magnoliopsida</taxon>
        <taxon>Magnoliidae</taxon>
        <taxon>Canellales</taxon>
        <taxon>Winteraceae</taxon>
        <taxon>Drimys</taxon>
    </lineage>
</organism>
<protein>
    <recommendedName>
        <fullName evidence="2">Large ribosomal subunit protein uL23cz/uL23cy</fullName>
    </recommendedName>
    <alternativeName>
        <fullName>50S ribosomal protein L23, chloroplastic</fullName>
    </alternativeName>
</protein>
<accession>Q06GT3</accession>
<comment type="function">
    <text evidence="1">Binds to 23S rRNA.</text>
</comment>
<comment type="subunit">
    <text evidence="1">Part of the 50S ribosomal subunit.</text>
</comment>
<comment type="subcellular location">
    <subcellularLocation>
        <location>Plastid</location>
        <location>Chloroplast</location>
    </subcellularLocation>
</comment>
<comment type="similarity">
    <text evidence="2">Belongs to the universal ribosomal protein uL23 family.</text>
</comment>
<gene>
    <name type="primary">rpl23-A</name>
</gene>
<gene>
    <name type="primary">rpl23-B</name>
</gene>
<proteinExistence type="inferred from homology"/>
<feature type="chain" id="PRO_0000272896" description="Large ribosomal subunit protein uL23cz/uL23cy">
    <location>
        <begin position="1"/>
        <end position="93"/>
    </location>
</feature>
<reference key="1">
    <citation type="journal article" date="2006" name="BMC Evol. Biol.">
        <title>Complete plastid genome sequences of Drimys, Liriodendron, and Piper: implications for the phylogenetic relationships of magnoliids.</title>
        <authorList>
            <person name="Cai Z."/>
            <person name="Penaflor C."/>
            <person name="Kuehl J.V."/>
            <person name="Leebens-Mack J."/>
            <person name="Carlson J.E."/>
            <person name="dePamphilis C.W."/>
            <person name="Boore J.L."/>
            <person name="Jansen R.K."/>
        </authorList>
    </citation>
    <scope>NUCLEOTIDE SEQUENCE [LARGE SCALE GENOMIC DNA]</scope>
</reference>
<dbReference type="EMBL" id="DQ887676">
    <property type="protein sequence ID" value="ABH88339.1"/>
    <property type="molecule type" value="Genomic_DNA"/>
</dbReference>
<dbReference type="EMBL" id="DQ887676">
    <property type="protein sequence ID" value="ABH88362.1"/>
    <property type="molecule type" value="Genomic_DNA"/>
</dbReference>
<dbReference type="SMR" id="Q06GT3"/>
<dbReference type="GO" id="GO:0009507">
    <property type="term" value="C:chloroplast"/>
    <property type="evidence" value="ECO:0007669"/>
    <property type="project" value="UniProtKB-SubCell"/>
</dbReference>
<dbReference type="GO" id="GO:1990904">
    <property type="term" value="C:ribonucleoprotein complex"/>
    <property type="evidence" value="ECO:0007669"/>
    <property type="project" value="UniProtKB-KW"/>
</dbReference>
<dbReference type="GO" id="GO:0005840">
    <property type="term" value="C:ribosome"/>
    <property type="evidence" value="ECO:0007669"/>
    <property type="project" value="UniProtKB-KW"/>
</dbReference>
<dbReference type="GO" id="GO:0019843">
    <property type="term" value="F:rRNA binding"/>
    <property type="evidence" value="ECO:0007669"/>
    <property type="project" value="UniProtKB-UniRule"/>
</dbReference>
<dbReference type="GO" id="GO:0003735">
    <property type="term" value="F:structural constituent of ribosome"/>
    <property type="evidence" value="ECO:0007669"/>
    <property type="project" value="InterPro"/>
</dbReference>
<dbReference type="GO" id="GO:0006412">
    <property type="term" value="P:translation"/>
    <property type="evidence" value="ECO:0007669"/>
    <property type="project" value="UniProtKB-UniRule"/>
</dbReference>
<dbReference type="FunFam" id="3.30.70.330:FF:000002">
    <property type="entry name" value="50S ribosomal protein L23, chloroplastic"/>
    <property type="match status" value="1"/>
</dbReference>
<dbReference type="Gene3D" id="3.30.70.330">
    <property type="match status" value="1"/>
</dbReference>
<dbReference type="HAMAP" id="MF_01369_B">
    <property type="entry name" value="Ribosomal_uL23_B"/>
    <property type="match status" value="1"/>
</dbReference>
<dbReference type="InterPro" id="IPR012677">
    <property type="entry name" value="Nucleotide-bd_a/b_plait_sf"/>
</dbReference>
<dbReference type="InterPro" id="IPR013025">
    <property type="entry name" value="Ribosomal_uL23-like"/>
</dbReference>
<dbReference type="InterPro" id="IPR012678">
    <property type="entry name" value="Ribosomal_uL23/eL15/eS24_sf"/>
</dbReference>
<dbReference type="InterPro" id="IPR001014">
    <property type="entry name" value="Ribosomal_uL23_CS"/>
</dbReference>
<dbReference type="PANTHER" id="PTHR11620">
    <property type="entry name" value="60S RIBOSOMAL PROTEIN L23A"/>
    <property type="match status" value="1"/>
</dbReference>
<dbReference type="Pfam" id="PF00276">
    <property type="entry name" value="Ribosomal_L23"/>
    <property type="match status" value="1"/>
</dbReference>
<dbReference type="SUPFAM" id="SSF54189">
    <property type="entry name" value="Ribosomal proteins S24e, L23 and L15e"/>
    <property type="match status" value="1"/>
</dbReference>
<dbReference type="PROSITE" id="PS00050">
    <property type="entry name" value="RIBOSOMAL_L23"/>
    <property type="match status" value="1"/>
</dbReference>
<geneLocation type="chloroplast"/>
<evidence type="ECO:0000250" key="1"/>
<evidence type="ECO:0000305" key="2"/>